<feature type="chain" id="PRO_0000223413" description="Urease accessory protein UreE">
    <location>
        <begin position="1"/>
        <end position="225"/>
    </location>
</feature>
<feature type="region of interest" description="Disordered" evidence="2">
    <location>
        <begin position="189"/>
        <end position="225"/>
    </location>
</feature>
<feature type="compositionally biased region" description="Basic and acidic residues" evidence="2">
    <location>
        <begin position="189"/>
        <end position="202"/>
    </location>
</feature>
<feature type="compositionally biased region" description="Basic and acidic residues" evidence="2">
    <location>
        <begin position="212"/>
        <end position="225"/>
    </location>
</feature>
<accession>Q6J171</accession>
<organism>
    <name type="scientific">Edwardsiella ictaluri</name>
    <dbReference type="NCBI Taxonomy" id="67780"/>
    <lineage>
        <taxon>Bacteria</taxon>
        <taxon>Pseudomonadati</taxon>
        <taxon>Pseudomonadota</taxon>
        <taxon>Gammaproteobacteria</taxon>
        <taxon>Enterobacterales</taxon>
        <taxon>Hafniaceae</taxon>
        <taxon>Edwardsiella</taxon>
    </lineage>
</organism>
<name>UREE_EDWIC</name>
<sequence>MIVISHVLGNVKTDPVWAEKLKAYELDYLTLEHGDMYKNSCRKMTEQGKDLGISLERNSLLADGDVLLCDDKHAYAIIVKLILRDVMIIDLTDLLNFSHEMMLKISFELGHALGNQHWKSIIHESQVFVPLSVSHKVMESVIQTHRFTGIHYRFEKGDSILSCLTPSEARLLFGGAEDLGAHVHVDHSHSHDFMGHSHEHEGHRHVHNHAGNSHDNEHDEHHSRR</sequence>
<dbReference type="EMBL" id="AY607844">
    <property type="protein sequence ID" value="AAT42448.1"/>
    <property type="molecule type" value="Genomic_DNA"/>
</dbReference>
<dbReference type="RefSeq" id="WP_015871368.1">
    <property type="nucleotide sequence ID" value="NZ_UFXT01000001.1"/>
</dbReference>
<dbReference type="SMR" id="Q6J171"/>
<dbReference type="GeneID" id="69538994"/>
<dbReference type="GO" id="GO:0005737">
    <property type="term" value="C:cytoplasm"/>
    <property type="evidence" value="ECO:0007669"/>
    <property type="project" value="UniProtKB-SubCell"/>
</dbReference>
<dbReference type="GO" id="GO:0016151">
    <property type="term" value="F:nickel cation binding"/>
    <property type="evidence" value="ECO:0007669"/>
    <property type="project" value="UniProtKB-UniRule"/>
</dbReference>
<dbReference type="GO" id="GO:0051082">
    <property type="term" value="F:unfolded protein binding"/>
    <property type="evidence" value="ECO:0007669"/>
    <property type="project" value="UniProtKB-UniRule"/>
</dbReference>
<dbReference type="GO" id="GO:0006457">
    <property type="term" value="P:protein folding"/>
    <property type="evidence" value="ECO:0007669"/>
    <property type="project" value="InterPro"/>
</dbReference>
<dbReference type="Gene3D" id="2.60.260.20">
    <property type="entry name" value="Urease metallochaperone UreE, N-terminal domain"/>
    <property type="match status" value="1"/>
</dbReference>
<dbReference type="HAMAP" id="MF_00822">
    <property type="entry name" value="UreE"/>
    <property type="match status" value="1"/>
</dbReference>
<dbReference type="InterPro" id="IPR012406">
    <property type="entry name" value="UreE"/>
</dbReference>
<dbReference type="InterPro" id="IPR004029">
    <property type="entry name" value="UreE_N"/>
</dbReference>
<dbReference type="InterPro" id="IPR036118">
    <property type="entry name" value="UreE_N_sf"/>
</dbReference>
<dbReference type="Pfam" id="PF02814">
    <property type="entry name" value="UreE_N"/>
    <property type="match status" value="1"/>
</dbReference>
<dbReference type="PIRSF" id="PIRSF036402">
    <property type="entry name" value="Ureas_acces_UreE"/>
    <property type="match status" value="1"/>
</dbReference>
<dbReference type="SMART" id="SM00988">
    <property type="entry name" value="UreE_N"/>
    <property type="match status" value="1"/>
</dbReference>
<dbReference type="SUPFAM" id="SSF69287">
    <property type="entry name" value="Urease metallochaperone UreE, N-terminal domain"/>
    <property type="match status" value="1"/>
</dbReference>
<proteinExistence type="inferred from homology"/>
<reference key="1">
    <citation type="submission" date="2004-04" db="EMBL/GenBank/DDBJ databases">
        <title>Identification of virulence factors involved in the pathogenesis of Edwardsiella ictaluri using signature tagged mutagenesis.</title>
        <authorList>
            <person name="Thune R.L."/>
            <person name="Fernandez D.H."/>
            <person name="Benoit J.L."/>
            <person name="Kelly-Smith M."/>
            <person name="Rogge M.L."/>
            <person name="Booth N.J."/>
            <person name="Bologna R.A."/>
        </authorList>
    </citation>
    <scope>NUCLEOTIDE SEQUENCE [GENOMIC DNA]</scope>
</reference>
<comment type="function">
    <text evidence="1">Involved in urease metallocenter assembly. Binds nickel. Probably functions as a nickel donor during metallocenter assembly.</text>
</comment>
<comment type="subcellular location">
    <subcellularLocation>
        <location evidence="1">Cytoplasm</location>
    </subcellularLocation>
</comment>
<comment type="similarity">
    <text evidence="1">Belongs to the UreE family.</text>
</comment>
<gene>
    <name evidence="1" type="primary">ureE</name>
</gene>
<protein>
    <recommendedName>
        <fullName evidence="1">Urease accessory protein UreE</fullName>
    </recommendedName>
</protein>
<keyword id="KW-0143">Chaperone</keyword>
<keyword id="KW-0963">Cytoplasm</keyword>
<keyword id="KW-0533">Nickel</keyword>
<keyword id="KW-0996">Nickel insertion</keyword>
<evidence type="ECO:0000255" key="1">
    <source>
        <dbReference type="HAMAP-Rule" id="MF_00822"/>
    </source>
</evidence>
<evidence type="ECO:0000256" key="2">
    <source>
        <dbReference type="SAM" id="MobiDB-lite"/>
    </source>
</evidence>